<proteinExistence type="inferred from homology"/>
<comment type="function">
    <text evidence="4">Component of the microsomal membrane bound fatty acid elongation system, which produces the 26-carbon very long-chain fatty acids (VLCFA) from palmitate. Catalyzes the reduction of the 3-ketoacyl-CoA intermediate that is formed in each cycle of fatty acid elongation. VLCFAs serve as precursors for ceramide and sphingolipids.</text>
</comment>
<comment type="catalytic activity">
    <reaction evidence="4">
        <text>a very-long-chain (3R)-3-hydroxyacyl-CoA + NADP(+) = a very-long-chain 3-oxoacyl-CoA + NADPH + H(+)</text>
        <dbReference type="Rhea" id="RHEA:48680"/>
        <dbReference type="ChEBI" id="CHEBI:15378"/>
        <dbReference type="ChEBI" id="CHEBI:57783"/>
        <dbReference type="ChEBI" id="CHEBI:58349"/>
        <dbReference type="ChEBI" id="CHEBI:85440"/>
        <dbReference type="ChEBI" id="CHEBI:90725"/>
        <dbReference type="EC" id="1.1.1.330"/>
    </reaction>
</comment>
<comment type="pathway">
    <text evidence="3">Lipid metabolism; fatty acid biosynthesis.</text>
</comment>
<comment type="subcellular location">
    <subcellularLocation>
        <location evidence="4">Endoplasmic reticulum membrane</location>
        <topology evidence="4">Single-pass membrane protein</topology>
    </subcellularLocation>
</comment>
<comment type="similarity">
    <text evidence="4">Belongs to the short-chain dehydrogenases/reductases (SDR) family.</text>
</comment>
<keyword id="KW-0256">Endoplasmic reticulum</keyword>
<keyword id="KW-0275">Fatty acid biosynthesis</keyword>
<keyword id="KW-0276">Fatty acid metabolism</keyword>
<keyword id="KW-0444">Lipid biosynthesis</keyword>
<keyword id="KW-0443">Lipid metabolism</keyword>
<keyword id="KW-0472">Membrane</keyword>
<keyword id="KW-0521">NADP</keyword>
<keyword id="KW-0560">Oxidoreductase</keyword>
<keyword id="KW-1185">Reference proteome</keyword>
<keyword id="KW-0812">Transmembrane</keyword>
<keyword id="KW-1133">Transmembrane helix</keyword>
<gene>
    <name type="ORF">ACLA_070510</name>
</gene>
<organism>
    <name type="scientific">Aspergillus clavatus (strain ATCC 1007 / CBS 513.65 / DSM 816 / NCTC 3887 / NRRL 1 / QM 1276 / 107)</name>
    <dbReference type="NCBI Taxonomy" id="344612"/>
    <lineage>
        <taxon>Eukaryota</taxon>
        <taxon>Fungi</taxon>
        <taxon>Dikarya</taxon>
        <taxon>Ascomycota</taxon>
        <taxon>Pezizomycotina</taxon>
        <taxon>Eurotiomycetes</taxon>
        <taxon>Eurotiomycetidae</taxon>
        <taxon>Eurotiales</taxon>
        <taxon>Aspergillaceae</taxon>
        <taxon>Aspergillus</taxon>
        <taxon>Aspergillus subgen. Fumigati</taxon>
    </lineage>
</organism>
<name>MKAR_ASPCL</name>
<reference key="1">
    <citation type="journal article" date="2008" name="PLoS Genet.">
        <title>Genomic islands in the pathogenic filamentous fungus Aspergillus fumigatus.</title>
        <authorList>
            <person name="Fedorova N.D."/>
            <person name="Khaldi N."/>
            <person name="Joardar V.S."/>
            <person name="Maiti R."/>
            <person name="Amedeo P."/>
            <person name="Anderson M.J."/>
            <person name="Crabtree J."/>
            <person name="Silva J.C."/>
            <person name="Badger J.H."/>
            <person name="Albarraq A."/>
            <person name="Angiuoli S."/>
            <person name="Bussey H."/>
            <person name="Bowyer P."/>
            <person name="Cotty P.J."/>
            <person name="Dyer P.S."/>
            <person name="Egan A."/>
            <person name="Galens K."/>
            <person name="Fraser-Liggett C.M."/>
            <person name="Haas B.J."/>
            <person name="Inman J.M."/>
            <person name="Kent R."/>
            <person name="Lemieux S."/>
            <person name="Malavazi I."/>
            <person name="Orvis J."/>
            <person name="Roemer T."/>
            <person name="Ronning C.M."/>
            <person name="Sundaram J.P."/>
            <person name="Sutton G."/>
            <person name="Turner G."/>
            <person name="Venter J.C."/>
            <person name="White O.R."/>
            <person name="Whitty B.R."/>
            <person name="Youngman P."/>
            <person name="Wolfe K.H."/>
            <person name="Goldman G.H."/>
            <person name="Wortman J.R."/>
            <person name="Jiang B."/>
            <person name="Denning D.W."/>
            <person name="Nierman W.C."/>
        </authorList>
    </citation>
    <scope>NUCLEOTIDE SEQUENCE [LARGE SCALE GENOMIC DNA]</scope>
    <source>
        <strain>ATCC 1007 / CBS 513.65 / DSM 816 / NCTC 3887 / NRRL 1 / QM 1276 / 107</strain>
    </source>
</reference>
<feature type="chain" id="PRO_0000357295" description="Very-long-chain 3-oxoacyl-CoA reductase">
    <location>
        <begin position="1"/>
        <end position="345"/>
    </location>
</feature>
<feature type="transmembrane region" description="Helical" evidence="4">
    <location>
        <begin position="26"/>
        <end position="46"/>
    </location>
</feature>
<feature type="active site" description="Proton donor" evidence="2">
    <location>
        <position position="219"/>
    </location>
</feature>
<feature type="active site" description="Lowers pKa of active site Tyr" evidence="2">
    <location>
        <position position="223"/>
    </location>
</feature>
<feature type="binding site" evidence="1">
    <location>
        <position position="71"/>
    </location>
    <ligand>
        <name>NADP(+)</name>
        <dbReference type="ChEBI" id="CHEBI:58349"/>
    </ligand>
</feature>
<feature type="binding site" evidence="1">
    <location>
        <position position="125"/>
    </location>
    <ligand>
        <name>NADP(+)</name>
        <dbReference type="ChEBI" id="CHEBI:58349"/>
    </ligand>
</feature>
<feature type="binding site" evidence="1">
    <location>
        <position position="133"/>
    </location>
    <ligand>
        <name>NADP(+)</name>
        <dbReference type="ChEBI" id="CHEBI:58349"/>
    </ligand>
</feature>
<feature type="binding site" evidence="2">
    <location>
        <position position="152"/>
    </location>
    <ligand>
        <name>NADP(+)</name>
        <dbReference type="ChEBI" id="CHEBI:58349"/>
    </ligand>
</feature>
<feature type="binding site" evidence="2">
    <location>
        <position position="219"/>
    </location>
    <ligand>
        <name>NADP(+)</name>
        <dbReference type="ChEBI" id="CHEBI:58349"/>
    </ligand>
</feature>
<feature type="binding site" evidence="2">
    <location>
        <position position="223"/>
    </location>
    <ligand>
        <name>NADP(+)</name>
        <dbReference type="ChEBI" id="CHEBI:58349"/>
    </ligand>
</feature>
<feature type="binding site" evidence="2">
    <location>
        <position position="252"/>
    </location>
    <ligand>
        <name>NADP(+)</name>
        <dbReference type="ChEBI" id="CHEBI:58349"/>
    </ligand>
</feature>
<feature type="binding site" evidence="1">
    <location>
        <position position="254"/>
    </location>
    <ligand>
        <name>NADP(+)</name>
        <dbReference type="ChEBI" id="CHEBI:58349"/>
    </ligand>
</feature>
<evidence type="ECO:0000250" key="1">
    <source>
        <dbReference type="UniProtKB" id="L0E2Z4"/>
    </source>
</evidence>
<evidence type="ECO:0000250" key="2">
    <source>
        <dbReference type="UniProtKB" id="O93868"/>
    </source>
</evidence>
<evidence type="ECO:0000250" key="3">
    <source>
        <dbReference type="UniProtKB" id="P38286"/>
    </source>
</evidence>
<evidence type="ECO:0000255" key="4">
    <source>
        <dbReference type="HAMAP-Rule" id="MF_03107"/>
    </source>
</evidence>
<dbReference type="EC" id="1.1.1.330" evidence="4"/>
<dbReference type="EMBL" id="DS027045">
    <property type="protein sequence ID" value="EAW14019.1"/>
    <property type="molecule type" value="Genomic_DNA"/>
</dbReference>
<dbReference type="RefSeq" id="XP_001275445.1">
    <property type="nucleotide sequence ID" value="XM_001275444.1"/>
</dbReference>
<dbReference type="SMR" id="A1C6J8"/>
<dbReference type="STRING" id="344612.A1C6J8"/>
<dbReference type="EnsemblFungi" id="EAW14019">
    <property type="protein sequence ID" value="EAW14019"/>
    <property type="gene ID" value="ACLA_070510"/>
</dbReference>
<dbReference type="GeneID" id="4707601"/>
<dbReference type="KEGG" id="act:ACLA_070510"/>
<dbReference type="VEuPathDB" id="FungiDB:ACLA_070510"/>
<dbReference type="eggNOG" id="KOG1014">
    <property type="taxonomic scope" value="Eukaryota"/>
</dbReference>
<dbReference type="HOGENOM" id="CLU_010194_38_0_1"/>
<dbReference type="OMA" id="LVAPGMM"/>
<dbReference type="OrthoDB" id="5545019at2759"/>
<dbReference type="UniPathway" id="UPA00094"/>
<dbReference type="Proteomes" id="UP000006701">
    <property type="component" value="Unassembled WGS sequence"/>
</dbReference>
<dbReference type="GO" id="GO:0005789">
    <property type="term" value="C:endoplasmic reticulum membrane"/>
    <property type="evidence" value="ECO:0007669"/>
    <property type="project" value="UniProtKB-SubCell"/>
</dbReference>
<dbReference type="GO" id="GO:0045703">
    <property type="term" value="F:ketoreductase activity"/>
    <property type="evidence" value="ECO:0007669"/>
    <property type="project" value="UniProtKB-UniRule"/>
</dbReference>
<dbReference type="GO" id="GO:0141040">
    <property type="term" value="F:very-long-chain 3-oxoacyl-CoA reductase activity"/>
    <property type="evidence" value="ECO:0007669"/>
    <property type="project" value="UniProtKB-EC"/>
</dbReference>
<dbReference type="GO" id="GO:0030497">
    <property type="term" value="P:fatty acid elongation"/>
    <property type="evidence" value="ECO:0007669"/>
    <property type="project" value="UniProtKB-UniRule"/>
</dbReference>
<dbReference type="GO" id="GO:0044550">
    <property type="term" value="P:secondary metabolite biosynthetic process"/>
    <property type="evidence" value="ECO:0007669"/>
    <property type="project" value="UniProtKB-ARBA"/>
</dbReference>
<dbReference type="GO" id="GO:0030148">
    <property type="term" value="P:sphingolipid biosynthetic process"/>
    <property type="evidence" value="ECO:0007669"/>
    <property type="project" value="EnsemblFungi"/>
</dbReference>
<dbReference type="GO" id="GO:0042761">
    <property type="term" value="P:very long-chain fatty acid biosynthetic process"/>
    <property type="evidence" value="ECO:0007669"/>
    <property type="project" value="EnsemblFungi"/>
</dbReference>
<dbReference type="CDD" id="cd05356">
    <property type="entry name" value="17beta-HSD1_like_SDR_c"/>
    <property type="match status" value="1"/>
</dbReference>
<dbReference type="FunFam" id="3.40.50.720:FF:000317">
    <property type="entry name" value="Very-long-chain 3-oxoacyl-CoA reductase"/>
    <property type="match status" value="1"/>
</dbReference>
<dbReference type="Gene3D" id="3.40.50.720">
    <property type="entry name" value="NAD(P)-binding Rossmann-like Domain"/>
    <property type="match status" value="1"/>
</dbReference>
<dbReference type="HAMAP" id="MF_03107">
    <property type="entry name" value="3_ketoreductase"/>
    <property type="match status" value="1"/>
</dbReference>
<dbReference type="InterPro" id="IPR027533">
    <property type="entry name" value="3_ketoreductase_fungal"/>
</dbReference>
<dbReference type="InterPro" id="IPR036291">
    <property type="entry name" value="NAD(P)-bd_dom_sf"/>
</dbReference>
<dbReference type="InterPro" id="IPR020904">
    <property type="entry name" value="Sc_DH/Rdtase_CS"/>
</dbReference>
<dbReference type="InterPro" id="IPR002347">
    <property type="entry name" value="SDR_fam"/>
</dbReference>
<dbReference type="PANTHER" id="PTHR43086:SF2">
    <property type="entry name" value="HYDROXYSTEROID DEHYDROGENASE-LIKE PROTEIN 1"/>
    <property type="match status" value="1"/>
</dbReference>
<dbReference type="PANTHER" id="PTHR43086">
    <property type="entry name" value="VERY-LONG-CHAIN 3-OXOOACYL-COA REDUCTASE"/>
    <property type="match status" value="1"/>
</dbReference>
<dbReference type="Pfam" id="PF00106">
    <property type="entry name" value="adh_short"/>
    <property type="match status" value="1"/>
</dbReference>
<dbReference type="PIRSF" id="PIRSF000126">
    <property type="entry name" value="11-beta-HSD1"/>
    <property type="match status" value="1"/>
</dbReference>
<dbReference type="PRINTS" id="PR00081">
    <property type="entry name" value="GDHRDH"/>
</dbReference>
<dbReference type="SUPFAM" id="SSF51735">
    <property type="entry name" value="NAD(P)-binding Rossmann-fold domains"/>
    <property type="match status" value="1"/>
</dbReference>
<dbReference type="PROSITE" id="PS00061">
    <property type="entry name" value="ADH_SHORT"/>
    <property type="match status" value="1"/>
</dbReference>
<protein>
    <recommendedName>
        <fullName evidence="4">Very-long-chain 3-oxoacyl-CoA reductase</fullName>
        <ecNumber evidence="4">1.1.1.330</ecNumber>
    </recommendedName>
    <alternativeName>
        <fullName evidence="4">3-ketoacyl-CoA reductase</fullName>
        <shortName evidence="4">3-ketoreductase</shortName>
        <shortName evidence="4">KAR</shortName>
    </alternativeName>
    <alternativeName>
        <fullName evidence="4">Microsomal beta-keto-reductase</fullName>
    </alternativeName>
</protein>
<accession>A1C6J8</accession>
<sequence>MDFVSKYMSCLSSWGLDLQPGLQSVGAAVLLATGGLFLASRVLTFVRVLLSLFVLPGKPLRSFGPKGSWAVVTGASDGLGKEFALQLARAGFNIVLVSRTASKLATLAEEITAKHSVQTRTLAMDFAANDDTDYEDLKTLVDGLDVSILINNVGKSHDIPVPFALTPEDEMTDIVTINCLGTLRATQLVIPGMMQRRRGLVLTMGSFGGLLPTPLLATYSGSKAFLQQWSTSLGSELEPYGITVELVQAYLITSAMSKVRRTSALIPSPRAFVSSVLSKIGRNGGSPTYSYSSSPYWSHGLMAYFLTCVLQPMGKLVVGQNRTMHEAIRKRALRKAEREKGKKST</sequence>